<gene>
    <name evidence="1" type="primary">metK</name>
    <name type="ordered locus">Mmc1_3332</name>
</gene>
<name>METK_MAGMM</name>
<sequence>MPRNYLFSSESVSEGHPDKMADQISDAILDALLAQDPLSRVACETMVSTGFCTIAGEITTKAVIDYQKIARETINAIGYTSADTMGYSGDTAAIFVALDKQSVDIAQGVNEGEGIDLDQGAGDQGIMFGYACTETDVLMPMPIYYAHRLMEKHAELRKSGELAWARPDAKSQVTVRYVDDKPVSVEAVVISSQHSPDVDHDTIEKEIIEKVIRAVIPAELLHEGTQYFINPTGRFVIGGPVGDAGVTGRKIIVDTYGGMGSHGGGAFSGKDPSKVDRSSAYMGRYVAKNIVAAGLAEKCEIQVAYAIGVSQPMSVMVDTFGTGKLDDEAITELVKKHFDLRPKAIVQQLDLLRPIYKKSAAYGHFGRELPEFTWERTDKAAALRADAGL</sequence>
<comment type="function">
    <text evidence="1">Catalyzes the formation of S-adenosylmethionine (AdoMet) from methionine and ATP. The overall synthetic reaction is composed of two sequential steps, AdoMet formation and the subsequent tripolyphosphate hydrolysis which occurs prior to release of AdoMet from the enzyme.</text>
</comment>
<comment type="catalytic activity">
    <reaction evidence="1">
        <text>L-methionine + ATP + H2O = S-adenosyl-L-methionine + phosphate + diphosphate</text>
        <dbReference type="Rhea" id="RHEA:21080"/>
        <dbReference type="ChEBI" id="CHEBI:15377"/>
        <dbReference type="ChEBI" id="CHEBI:30616"/>
        <dbReference type="ChEBI" id="CHEBI:33019"/>
        <dbReference type="ChEBI" id="CHEBI:43474"/>
        <dbReference type="ChEBI" id="CHEBI:57844"/>
        <dbReference type="ChEBI" id="CHEBI:59789"/>
        <dbReference type="EC" id="2.5.1.6"/>
    </reaction>
</comment>
<comment type="cofactor">
    <cofactor evidence="1">
        <name>Mg(2+)</name>
        <dbReference type="ChEBI" id="CHEBI:18420"/>
    </cofactor>
    <text evidence="1">Binds 2 divalent ions per subunit.</text>
</comment>
<comment type="cofactor">
    <cofactor evidence="1">
        <name>K(+)</name>
        <dbReference type="ChEBI" id="CHEBI:29103"/>
    </cofactor>
    <text evidence="1">Binds 1 potassium ion per subunit.</text>
</comment>
<comment type="pathway">
    <text evidence="1">Amino-acid biosynthesis; S-adenosyl-L-methionine biosynthesis; S-adenosyl-L-methionine from L-methionine: step 1/1.</text>
</comment>
<comment type="subunit">
    <text evidence="1">Homotetramer; dimer of dimers.</text>
</comment>
<comment type="subcellular location">
    <subcellularLocation>
        <location evidence="1">Cytoplasm</location>
    </subcellularLocation>
</comment>
<comment type="similarity">
    <text evidence="1">Belongs to the AdoMet synthase family.</text>
</comment>
<accession>A0LCX5</accession>
<proteinExistence type="inferred from homology"/>
<protein>
    <recommendedName>
        <fullName evidence="1">S-adenosylmethionine synthase</fullName>
        <shortName evidence="1">AdoMet synthase</shortName>
        <ecNumber evidence="1">2.5.1.6</ecNumber>
    </recommendedName>
    <alternativeName>
        <fullName evidence="1">MAT</fullName>
    </alternativeName>
    <alternativeName>
        <fullName evidence="1">Methionine adenosyltransferase</fullName>
    </alternativeName>
</protein>
<feature type="chain" id="PRO_0000302934" description="S-adenosylmethionine synthase">
    <location>
        <begin position="1"/>
        <end position="389"/>
    </location>
</feature>
<feature type="region of interest" description="Flexible loop" evidence="1">
    <location>
        <begin position="101"/>
        <end position="111"/>
    </location>
</feature>
<feature type="binding site" description="in other chain" evidence="1">
    <location>
        <position position="16"/>
    </location>
    <ligand>
        <name>ATP</name>
        <dbReference type="ChEBI" id="CHEBI:30616"/>
        <note>ligand shared between two neighboring subunits</note>
    </ligand>
</feature>
<feature type="binding site" evidence="1">
    <location>
        <position position="18"/>
    </location>
    <ligand>
        <name>Mg(2+)</name>
        <dbReference type="ChEBI" id="CHEBI:18420"/>
    </ligand>
</feature>
<feature type="binding site" evidence="1">
    <location>
        <position position="44"/>
    </location>
    <ligand>
        <name>K(+)</name>
        <dbReference type="ChEBI" id="CHEBI:29103"/>
    </ligand>
</feature>
<feature type="binding site" description="in other chain" evidence="1">
    <location>
        <position position="57"/>
    </location>
    <ligand>
        <name>L-methionine</name>
        <dbReference type="ChEBI" id="CHEBI:57844"/>
        <note>ligand shared between two neighboring subunits</note>
    </ligand>
</feature>
<feature type="binding site" description="in other chain" evidence="1">
    <location>
        <position position="101"/>
    </location>
    <ligand>
        <name>L-methionine</name>
        <dbReference type="ChEBI" id="CHEBI:57844"/>
        <note>ligand shared between two neighboring subunits</note>
    </ligand>
</feature>
<feature type="binding site" description="in other chain" evidence="1">
    <location>
        <begin position="168"/>
        <end position="170"/>
    </location>
    <ligand>
        <name>ATP</name>
        <dbReference type="ChEBI" id="CHEBI:30616"/>
        <note>ligand shared between two neighboring subunits</note>
    </ligand>
</feature>
<feature type="binding site" description="in other chain" evidence="1">
    <location>
        <begin position="234"/>
        <end position="235"/>
    </location>
    <ligand>
        <name>ATP</name>
        <dbReference type="ChEBI" id="CHEBI:30616"/>
        <note>ligand shared between two neighboring subunits</note>
    </ligand>
</feature>
<feature type="binding site" evidence="1">
    <location>
        <position position="243"/>
    </location>
    <ligand>
        <name>ATP</name>
        <dbReference type="ChEBI" id="CHEBI:30616"/>
        <note>ligand shared between two neighboring subunits</note>
    </ligand>
</feature>
<feature type="binding site" evidence="1">
    <location>
        <position position="243"/>
    </location>
    <ligand>
        <name>L-methionine</name>
        <dbReference type="ChEBI" id="CHEBI:57844"/>
        <note>ligand shared between two neighboring subunits</note>
    </ligand>
</feature>
<feature type="binding site" description="in other chain" evidence="1">
    <location>
        <begin position="249"/>
        <end position="250"/>
    </location>
    <ligand>
        <name>ATP</name>
        <dbReference type="ChEBI" id="CHEBI:30616"/>
        <note>ligand shared between two neighboring subunits</note>
    </ligand>
</feature>
<feature type="binding site" evidence="1">
    <location>
        <position position="266"/>
    </location>
    <ligand>
        <name>ATP</name>
        <dbReference type="ChEBI" id="CHEBI:30616"/>
        <note>ligand shared between two neighboring subunits</note>
    </ligand>
</feature>
<feature type="binding site" evidence="1">
    <location>
        <position position="270"/>
    </location>
    <ligand>
        <name>ATP</name>
        <dbReference type="ChEBI" id="CHEBI:30616"/>
        <note>ligand shared between two neighboring subunits</note>
    </ligand>
</feature>
<feature type="binding site" description="in other chain" evidence="1">
    <location>
        <position position="274"/>
    </location>
    <ligand>
        <name>L-methionine</name>
        <dbReference type="ChEBI" id="CHEBI:57844"/>
        <note>ligand shared between two neighboring subunits</note>
    </ligand>
</feature>
<keyword id="KW-0067">ATP-binding</keyword>
<keyword id="KW-0963">Cytoplasm</keyword>
<keyword id="KW-0460">Magnesium</keyword>
<keyword id="KW-0479">Metal-binding</keyword>
<keyword id="KW-0547">Nucleotide-binding</keyword>
<keyword id="KW-0554">One-carbon metabolism</keyword>
<keyword id="KW-0630">Potassium</keyword>
<keyword id="KW-1185">Reference proteome</keyword>
<keyword id="KW-0808">Transferase</keyword>
<evidence type="ECO:0000255" key="1">
    <source>
        <dbReference type="HAMAP-Rule" id="MF_00086"/>
    </source>
</evidence>
<reference key="1">
    <citation type="journal article" date="2009" name="Appl. Environ. Microbiol.">
        <title>Complete genome sequence of the chemolithoautotrophic marine magnetotactic coccus strain MC-1.</title>
        <authorList>
            <person name="Schubbe S."/>
            <person name="Williams T.J."/>
            <person name="Xie G."/>
            <person name="Kiss H.E."/>
            <person name="Brettin T.S."/>
            <person name="Martinez D."/>
            <person name="Ross C.A."/>
            <person name="Schuler D."/>
            <person name="Cox B.L."/>
            <person name="Nealson K.H."/>
            <person name="Bazylinski D.A."/>
        </authorList>
    </citation>
    <scope>NUCLEOTIDE SEQUENCE [LARGE SCALE GENOMIC DNA]</scope>
    <source>
        <strain>ATCC BAA-1437 / JCM 17883 / MC-1</strain>
    </source>
</reference>
<organism>
    <name type="scientific">Magnetococcus marinus (strain ATCC BAA-1437 / JCM 17883 / MC-1)</name>
    <dbReference type="NCBI Taxonomy" id="156889"/>
    <lineage>
        <taxon>Bacteria</taxon>
        <taxon>Pseudomonadati</taxon>
        <taxon>Pseudomonadota</taxon>
        <taxon>Alphaproteobacteria</taxon>
        <taxon>Magnetococcales</taxon>
        <taxon>Magnetococcaceae</taxon>
        <taxon>Magnetococcus</taxon>
    </lineage>
</organism>
<dbReference type="EC" id="2.5.1.6" evidence="1"/>
<dbReference type="EMBL" id="CP000471">
    <property type="protein sequence ID" value="ABK45818.1"/>
    <property type="molecule type" value="Genomic_DNA"/>
</dbReference>
<dbReference type="RefSeq" id="WP_011714877.1">
    <property type="nucleotide sequence ID" value="NC_008576.1"/>
</dbReference>
<dbReference type="SMR" id="A0LCX5"/>
<dbReference type="STRING" id="156889.Mmc1_3332"/>
<dbReference type="KEGG" id="mgm:Mmc1_3332"/>
<dbReference type="eggNOG" id="COG0192">
    <property type="taxonomic scope" value="Bacteria"/>
</dbReference>
<dbReference type="HOGENOM" id="CLU_041802_1_1_5"/>
<dbReference type="OrthoDB" id="9801686at2"/>
<dbReference type="UniPathway" id="UPA00315">
    <property type="reaction ID" value="UER00080"/>
</dbReference>
<dbReference type="Proteomes" id="UP000002586">
    <property type="component" value="Chromosome"/>
</dbReference>
<dbReference type="GO" id="GO:0005737">
    <property type="term" value="C:cytoplasm"/>
    <property type="evidence" value="ECO:0007669"/>
    <property type="project" value="UniProtKB-SubCell"/>
</dbReference>
<dbReference type="GO" id="GO:0005524">
    <property type="term" value="F:ATP binding"/>
    <property type="evidence" value="ECO:0007669"/>
    <property type="project" value="UniProtKB-UniRule"/>
</dbReference>
<dbReference type="GO" id="GO:0000287">
    <property type="term" value="F:magnesium ion binding"/>
    <property type="evidence" value="ECO:0007669"/>
    <property type="project" value="UniProtKB-UniRule"/>
</dbReference>
<dbReference type="GO" id="GO:0004478">
    <property type="term" value="F:methionine adenosyltransferase activity"/>
    <property type="evidence" value="ECO:0007669"/>
    <property type="project" value="UniProtKB-UniRule"/>
</dbReference>
<dbReference type="GO" id="GO:0006730">
    <property type="term" value="P:one-carbon metabolic process"/>
    <property type="evidence" value="ECO:0007669"/>
    <property type="project" value="UniProtKB-KW"/>
</dbReference>
<dbReference type="GO" id="GO:0006556">
    <property type="term" value="P:S-adenosylmethionine biosynthetic process"/>
    <property type="evidence" value="ECO:0007669"/>
    <property type="project" value="UniProtKB-UniRule"/>
</dbReference>
<dbReference type="CDD" id="cd18079">
    <property type="entry name" value="S-AdoMet_synt"/>
    <property type="match status" value="1"/>
</dbReference>
<dbReference type="FunFam" id="3.30.300.10:FF:000003">
    <property type="entry name" value="S-adenosylmethionine synthase"/>
    <property type="match status" value="1"/>
</dbReference>
<dbReference type="FunFam" id="3.30.300.10:FF:000004">
    <property type="entry name" value="S-adenosylmethionine synthase"/>
    <property type="match status" value="1"/>
</dbReference>
<dbReference type="Gene3D" id="3.30.300.10">
    <property type="match status" value="3"/>
</dbReference>
<dbReference type="HAMAP" id="MF_00086">
    <property type="entry name" value="S_AdoMet_synth1"/>
    <property type="match status" value="1"/>
</dbReference>
<dbReference type="InterPro" id="IPR022631">
    <property type="entry name" value="ADOMET_SYNTHASE_CS"/>
</dbReference>
<dbReference type="InterPro" id="IPR022630">
    <property type="entry name" value="S-AdoMet_synt_C"/>
</dbReference>
<dbReference type="InterPro" id="IPR022629">
    <property type="entry name" value="S-AdoMet_synt_central"/>
</dbReference>
<dbReference type="InterPro" id="IPR022628">
    <property type="entry name" value="S-AdoMet_synt_N"/>
</dbReference>
<dbReference type="InterPro" id="IPR002133">
    <property type="entry name" value="S-AdoMet_synthetase"/>
</dbReference>
<dbReference type="InterPro" id="IPR022636">
    <property type="entry name" value="S-AdoMet_synthetase_sfam"/>
</dbReference>
<dbReference type="NCBIfam" id="TIGR01034">
    <property type="entry name" value="metK"/>
    <property type="match status" value="1"/>
</dbReference>
<dbReference type="PANTHER" id="PTHR11964">
    <property type="entry name" value="S-ADENOSYLMETHIONINE SYNTHETASE"/>
    <property type="match status" value="1"/>
</dbReference>
<dbReference type="Pfam" id="PF02773">
    <property type="entry name" value="S-AdoMet_synt_C"/>
    <property type="match status" value="1"/>
</dbReference>
<dbReference type="Pfam" id="PF02772">
    <property type="entry name" value="S-AdoMet_synt_M"/>
    <property type="match status" value="1"/>
</dbReference>
<dbReference type="Pfam" id="PF00438">
    <property type="entry name" value="S-AdoMet_synt_N"/>
    <property type="match status" value="1"/>
</dbReference>
<dbReference type="PIRSF" id="PIRSF000497">
    <property type="entry name" value="MAT"/>
    <property type="match status" value="1"/>
</dbReference>
<dbReference type="SUPFAM" id="SSF55973">
    <property type="entry name" value="S-adenosylmethionine synthetase"/>
    <property type="match status" value="3"/>
</dbReference>
<dbReference type="PROSITE" id="PS00376">
    <property type="entry name" value="ADOMET_SYNTHASE_1"/>
    <property type="match status" value="1"/>
</dbReference>
<dbReference type="PROSITE" id="PS00377">
    <property type="entry name" value="ADOMET_SYNTHASE_2"/>
    <property type="match status" value="1"/>
</dbReference>